<feature type="chain" id="PRO_0000358190" description="NADH-quinone oxidoreductase subunit C">
    <location>
        <begin position="1"/>
        <end position="213"/>
    </location>
</feature>
<evidence type="ECO:0000255" key="1">
    <source>
        <dbReference type="HAMAP-Rule" id="MF_01357"/>
    </source>
</evidence>
<reference key="1">
    <citation type="journal article" date="2011" name="Stand. Genomic Sci.">
        <title>Complete genome sequence of Rhodospirillum rubrum type strain (S1).</title>
        <authorList>
            <person name="Munk A.C."/>
            <person name="Copeland A."/>
            <person name="Lucas S."/>
            <person name="Lapidus A."/>
            <person name="Del Rio T.G."/>
            <person name="Barry K."/>
            <person name="Detter J.C."/>
            <person name="Hammon N."/>
            <person name="Israni S."/>
            <person name="Pitluck S."/>
            <person name="Brettin T."/>
            <person name="Bruce D."/>
            <person name="Han C."/>
            <person name="Tapia R."/>
            <person name="Gilna P."/>
            <person name="Schmutz J."/>
            <person name="Larimer F."/>
            <person name="Land M."/>
            <person name="Kyrpides N.C."/>
            <person name="Mavromatis K."/>
            <person name="Richardson P."/>
            <person name="Rohde M."/>
            <person name="Goeker M."/>
            <person name="Klenk H.P."/>
            <person name="Zhang Y."/>
            <person name="Roberts G.P."/>
            <person name="Reslewic S."/>
            <person name="Schwartz D.C."/>
        </authorList>
    </citation>
    <scope>NUCLEOTIDE SEQUENCE [LARGE SCALE GENOMIC DNA]</scope>
    <source>
        <strain>ATCC 11170 / ATH 1.1.1 / DSM 467 / LMG 4362 / NCIMB 8255 / S1</strain>
    </source>
</reference>
<gene>
    <name evidence="1" type="primary">nuoC</name>
    <name type="ordered locus">Rru_A1557</name>
</gene>
<dbReference type="EC" id="7.1.1.-" evidence="1"/>
<dbReference type="EMBL" id="CP000230">
    <property type="protein sequence ID" value="ABC22357.1"/>
    <property type="molecule type" value="Genomic_DNA"/>
</dbReference>
<dbReference type="RefSeq" id="WP_011389432.1">
    <property type="nucleotide sequence ID" value="NC_007643.1"/>
</dbReference>
<dbReference type="RefSeq" id="YP_426644.1">
    <property type="nucleotide sequence ID" value="NC_007643.1"/>
</dbReference>
<dbReference type="SMR" id="Q2RU38"/>
<dbReference type="STRING" id="269796.Rru_A1557"/>
<dbReference type="EnsemblBacteria" id="ABC22357">
    <property type="protein sequence ID" value="ABC22357"/>
    <property type="gene ID" value="Rru_A1557"/>
</dbReference>
<dbReference type="KEGG" id="rru:Rru_A1557"/>
<dbReference type="PATRIC" id="fig|269796.9.peg.1630"/>
<dbReference type="eggNOG" id="COG0852">
    <property type="taxonomic scope" value="Bacteria"/>
</dbReference>
<dbReference type="HOGENOM" id="CLU_042628_2_1_5"/>
<dbReference type="PhylomeDB" id="Q2RU38"/>
<dbReference type="Proteomes" id="UP000001929">
    <property type="component" value="Chromosome"/>
</dbReference>
<dbReference type="GO" id="GO:0005886">
    <property type="term" value="C:plasma membrane"/>
    <property type="evidence" value="ECO:0007669"/>
    <property type="project" value="UniProtKB-SubCell"/>
</dbReference>
<dbReference type="GO" id="GO:0008137">
    <property type="term" value="F:NADH dehydrogenase (ubiquinone) activity"/>
    <property type="evidence" value="ECO:0007669"/>
    <property type="project" value="InterPro"/>
</dbReference>
<dbReference type="GO" id="GO:0050136">
    <property type="term" value="F:NADH:ubiquinone reductase (non-electrogenic) activity"/>
    <property type="evidence" value="ECO:0007669"/>
    <property type="project" value="UniProtKB-UniRule"/>
</dbReference>
<dbReference type="GO" id="GO:0048038">
    <property type="term" value="F:quinone binding"/>
    <property type="evidence" value="ECO:0007669"/>
    <property type="project" value="UniProtKB-KW"/>
</dbReference>
<dbReference type="FunFam" id="3.30.460.80:FF:000002">
    <property type="entry name" value="NADH dehydrogenase iron-sulfur protein 3, mitochondrial"/>
    <property type="match status" value="1"/>
</dbReference>
<dbReference type="Gene3D" id="3.30.460.80">
    <property type="entry name" value="NADH:ubiquinone oxidoreductase, 30kDa subunit"/>
    <property type="match status" value="1"/>
</dbReference>
<dbReference type="HAMAP" id="MF_01357">
    <property type="entry name" value="NDH1_NuoC"/>
    <property type="match status" value="1"/>
</dbReference>
<dbReference type="InterPro" id="IPR010218">
    <property type="entry name" value="NADH_DH_suC"/>
</dbReference>
<dbReference type="InterPro" id="IPR037232">
    <property type="entry name" value="NADH_quin_OxRdtase_su_C/D-like"/>
</dbReference>
<dbReference type="InterPro" id="IPR001268">
    <property type="entry name" value="NADH_UbQ_OxRdtase_30kDa_su"/>
</dbReference>
<dbReference type="InterPro" id="IPR020396">
    <property type="entry name" value="NADH_UbQ_OxRdtase_CS"/>
</dbReference>
<dbReference type="NCBIfam" id="TIGR01961">
    <property type="entry name" value="NuoC_fam"/>
    <property type="match status" value="1"/>
</dbReference>
<dbReference type="NCBIfam" id="NF004733">
    <property type="entry name" value="PRK06074.1-5"/>
    <property type="match status" value="1"/>
</dbReference>
<dbReference type="PANTHER" id="PTHR10884:SF14">
    <property type="entry name" value="NADH DEHYDROGENASE [UBIQUINONE] IRON-SULFUR PROTEIN 3, MITOCHONDRIAL"/>
    <property type="match status" value="1"/>
</dbReference>
<dbReference type="PANTHER" id="PTHR10884">
    <property type="entry name" value="NADH DEHYDROGENASE UBIQUINONE IRON-SULFUR PROTEIN 3"/>
    <property type="match status" value="1"/>
</dbReference>
<dbReference type="Pfam" id="PF00329">
    <property type="entry name" value="Complex1_30kDa"/>
    <property type="match status" value="1"/>
</dbReference>
<dbReference type="SUPFAM" id="SSF143243">
    <property type="entry name" value="Nqo5-like"/>
    <property type="match status" value="1"/>
</dbReference>
<dbReference type="PROSITE" id="PS00542">
    <property type="entry name" value="COMPLEX1_30K"/>
    <property type="match status" value="1"/>
</dbReference>
<organism>
    <name type="scientific">Rhodospirillum rubrum (strain ATCC 11170 / ATH 1.1.1 / DSM 467 / LMG 4362 / NCIMB 8255 / S1)</name>
    <dbReference type="NCBI Taxonomy" id="269796"/>
    <lineage>
        <taxon>Bacteria</taxon>
        <taxon>Pseudomonadati</taxon>
        <taxon>Pseudomonadota</taxon>
        <taxon>Alphaproteobacteria</taxon>
        <taxon>Rhodospirillales</taxon>
        <taxon>Rhodospirillaceae</taxon>
        <taxon>Rhodospirillum</taxon>
    </lineage>
</organism>
<keyword id="KW-0997">Cell inner membrane</keyword>
<keyword id="KW-1003">Cell membrane</keyword>
<keyword id="KW-0472">Membrane</keyword>
<keyword id="KW-0520">NAD</keyword>
<keyword id="KW-0874">Quinone</keyword>
<keyword id="KW-1185">Reference proteome</keyword>
<keyword id="KW-1278">Translocase</keyword>
<keyword id="KW-0813">Transport</keyword>
<keyword id="KW-0830">Ubiquinone</keyword>
<accession>Q2RU38</accession>
<comment type="function">
    <text evidence="1">NDH-1 shuttles electrons from NADH, via FMN and iron-sulfur (Fe-S) centers, to quinones in the respiratory chain. The immediate electron acceptor for the enzyme in this species is believed to be ubiquinone. Couples the redox reaction to proton translocation (for every two electrons transferred, four hydrogen ions are translocated across the cytoplasmic membrane), and thus conserves the redox energy in a proton gradient.</text>
</comment>
<comment type="catalytic activity">
    <reaction evidence="1">
        <text>a quinone + NADH + 5 H(+)(in) = a quinol + NAD(+) + 4 H(+)(out)</text>
        <dbReference type="Rhea" id="RHEA:57888"/>
        <dbReference type="ChEBI" id="CHEBI:15378"/>
        <dbReference type="ChEBI" id="CHEBI:24646"/>
        <dbReference type="ChEBI" id="CHEBI:57540"/>
        <dbReference type="ChEBI" id="CHEBI:57945"/>
        <dbReference type="ChEBI" id="CHEBI:132124"/>
    </reaction>
</comment>
<comment type="subunit">
    <text evidence="1">NDH-1 is composed of 14 different subunits. Subunits NuoB, C, D, E, F, and G constitute the peripheral sector of the complex.</text>
</comment>
<comment type="subcellular location">
    <subcellularLocation>
        <location evidence="1">Cell inner membrane</location>
        <topology evidence="1">Peripheral membrane protein</topology>
        <orientation evidence="1">Cytoplasmic side</orientation>
    </subcellularLocation>
</comment>
<comment type="similarity">
    <text evidence="1">Belongs to the complex I 30 kDa subunit family.</text>
</comment>
<protein>
    <recommendedName>
        <fullName evidence="1">NADH-quinone oxidoreductase subunit C</fullName>
        <ecNumber evidence="1">7.1.1.-</ecNumber>
    </recommendedName>
    <alternativeName>
        <fullName evidence="1">NADH dehydrogenase I subunit C</fullName>
    </alternativeName>
    <alternativeName>
        <fullName evidence="1">NDH-1 subunit C</fullName>
    </alternativeName>
</protein>
<proteinExistence type="inferred from homology"/>
<sequence>MTSVFEERVESLKELGARIEAALPTDVVRVEMAKDELQVIAQRPSIAKVLTFLRDDSACRFSQLVDIAGVDYPSREERFEVVYNMLSMHHNQRIRVKISASEDTPVPSVTRVFSSANWFEREAWDMYGIFFSEHPDLRRLLSDYGFEGHAQRKDFPLTGYKEVRYDEELKRVVYEPVRLSQDFRTFDFLSPWEGMDRQIRRVLPGDEKAEGNA</sequence>
<name>NUOC_RHORT</name>